<comment type="function">
    <text evidence="1 2">Na(+)/Mg(2+) ion exchanger that acts as a predominant Mg(2+) efflux system at the plasma membrane. Transporter activity is driven by the inwardly directed electrochemical gradient for Na(+) ions, thus directly depends on the extracellular Na(+) ion concentration set by Na(+)/K(+) pump. Generates circadian cellular Mg(2+) fluxes that feed back to regulate clock-controlled gene expression and metabolism and facilitate higher energetic demands during the day (By similarity). Has a role in regulating the activity of ATP-dependent enzymes, including those operating in Krebs cycle and the electron transport chain (By similarity).</text>
</comment>
<comment type="catalytic activity">
    <reaction evidence="2">
        <text>Mg(2+)(in) + 2 Na(+)(out) = Mg(2+)(out) + 2 Na(+)(in)</text>
        <dbReference type="Rhea" id="RHEA:66616"/>
        <dbReference type="ChEBI" id="CHEBI:18420"/>
        <dbReference type="ChEBI" id="CHEBI:29101"/>
    </reaction>
    <physiologicalReaction direction="left-to-right" evidence="2">
        <dbReference type="Rhea" id="RHEA:66617"/>
    </physiologicalReaction>
</comment>
<comment type="subcellular location">
    <subcellularLocation>
        <location evidence="2">Cell membrane</location>
        <topology evidence="3">Multi-pass membrane protein</topology>
    </subcellularLocation>
    <subcellularLocation>
        <location evidence="2">Basolateral cell membrane</location>
        <topology evidence="3">Multi-pass membrane protein</topology>
    </subcellularLocation>
</comment>
<comment type="PTM">
    <text evidence="2">Phosphorylated.</text>
</comment>
<comment type="similarity">
    <text evidence="5">Belongs to the SLC41A transporter family.</text>
</comment>
<feature type="chain" id="PRO_0000295113" description="Solute carrier family 41 member 1">
    <location>
        <begin position="1"/>
        <end position="513"/>
    </location>
</feature>
<feature type="transmembrane region" description="Helical" evidence="3">
    <location>
        <begin position="102"/>
        <end position="122"/>
    </location>
</feature>
<feature type="transmembrane region" description="Helical" evidence="3">
    <location>
        <begin position="185"/>
        <end position="205"/>
    </location>
</feature>
<feature type="transmembrane region" description="Helical" evidence="3">
    <location>
        <begin position="222"/>
        <end position="242"/>
    </location>
</feature>
<feature type="transmembrane region" description="Helical" evidence="3">
    <location>
        <begin position="257"/>
        <end position="277"/>
    </location>
</feature>
<feature type="transmembrane region" description="Helical" evidence="3">
    <location>
        <begin position="286"/>
        <end position="306"/>
    </location>
</feature>
<feature type="transmembrane region" description="Helical" evidence="3">
    <location>
        <begin position="316"/>
        <end position="336"/>
    </location>
</feature>
<feature type="transmembrane region" description="Helical" evidence="3">
    <location>
        <begin position="346"/>
        <end position="366"/>
    </location>
</feature>
<feature type="transmembrane region" description="Helical" evidence="3">
    <location>
        <begin position="411"/>
        <end position="431"/>
    </location>
</feature>
<feature type="transmembrane region" description="Helical" evidence="3">
    <location>
        <begin position="439"/>
        <end position="459"/>
    </location>
</feature>
<feature type="transmembrane region" description="Helical" evidence="3">
    <location>
        <begin position="484"/>
        <end position="504"/>
    </location>
</feature>
<feature type="region of interest" description="Disordered" evidence="4">
    <location>
        <begin position="1"/>
        <end position="42"/>
    </location>
</feature>
<feature type="region of interest" description="Disordered" evidence="4">
    <location>
        <begin position="60"/>
        <end position="91"/>
    </location>
</feature>
<feature type="compositionally biased region" description="Basic and acidic residues" evidence="4">
    <location>
        <begin position="1"/>
        <end position="11"/>
    </location>
</feature>
<feature type="compositionally biased region" description="Polar residues" evidence="4">
    <location>
        <begin position="13"/>
        <end position="24"/>
    </location>
</feature>
<accession>Q5R839</accession>
<reference key="1">
    <citation type="submission" date="2004-11" db="EMBL/GenBank/DDBJ databases">
        <authorList>
            <consortium name="The German cDNA consortium"/>
        </authorList>
    </citation>
    <scope>NUCLEOTIDE SEQUENCE [LARGE SCALE MRNA]</scope>
    <source>
        <tissue>Kidney</tissue>
    </source>
</reference>
<gene>
    <name type="primary">SLC41A1</name>
</gene>
<protein>
    <recommendedName>
        <fullName>Solute carrier family 41 member 1</fullName>
    </recommendedName>
</protein>
<name>S41A1_PONAB</name>
<dbReference type="EMBL" id="CR859915">
    <property type="protein sequence ID" value="CAH92071.1"/>
    <property type="molecule type" value="mRNA"/>
</dbReference>
<dbReference type="RefSeq" id="NP_001126207.1">
    <property type="nucleotide sequence ID" value="NM_001132735.1"/>
</dbReference>
<dbReference type="RefSeq" id="XP_024090017.1">
    <property type="nucleotide sequence ID" value="XM_024234249.3"/>
</dbReference>
<dbReference type="FunCoup" id="Q5R839">
    <property type="interactions" value="221"/>
</dbReference>
<dbReference type="STRING" id="9601.ENSPPYP00000000317"/>
<dbReference type="Ensembl" id="ENSPPYT00000000334.2">
    <property type="protein sequence ID" value="ENSPPYP00000000317.1"/>
    <property type="gene ID" value="ENSPPYG00000000297.2"/>
</dbReference>
<dbReference type="GeneID" id="100173175"/>
<dbReference type="KEGG" id="pon:100173175"/>
<dbReference type="CTD" id="254428"/>
<dbReference type="eggNOG" id="KOG3788">
    <property type="taxonomic scope" value="Eukaryota"/>
</dbReference>
<dbReference type="GeneTree" id="ENSGT00950000183042"/>
<dbReference type="HOGENOM" id="CLU_018207_3_1_1"/>
<dbReference type="InParanoid" id="Q5R839"/>
<dbReference type="OMA" id="WDPDNVT"/>
<dbReference type="OrthoDB" id="5791097at2759"/>
<dbReference type="TreeFam" id="TF313647"/>
<dbReference type="Proteomes" id="UP000001595">
    <property type="component" value="Chromosome 1"/>
</dbReference>
<dbReference type="GO" id="GO:0016323">
    <property type="term" value="C:basolateral plasma membrane"/>
    <property type="evidence" value="ECO:0007669"/>
    <property type="project" value="UniProtKB-SubCell"/>
</dbReference>
<dbReference type="GO" id="GO:0032991">
    <property type="term" value="C:protein-containing complex"/>
    <property type="evidence" value="ECO:0007669"/>
    <property type="project" value="Ensembl"/>
</dbReference>
<dbReference type="GO" id="GO:0061768">
    <property type="term" value="F:magnesium:sodium antiporter activity"/>
    <property type="evidence" value="ECO:0000250"/>
    <property type="project" value="UniProtKB"/>
</dbReference>
<dbReference type="GO" id="GO:0071286">
    <property type="term" value="P:cellular response to magnesium ion"/>
    <property type="evidence" value="ECO:0007669"/>
    <property type="project" value="Ensembl"/>
</dbReference>
<dbReference type="GO" id="GO:0010961">
    <property type="term" value="P:intracellular magnesium ion homeostasis"/>
    <property type="evidence" value="ECO:0007669"/>
    <property type="project" value="Ensembl"/>
</dbReference>
<dbReference type="FunFam" id="1.10.357.20:FF:000001">
    <property type="entry name" value="Solute carrier family 41 member 2"/>
    <property type="match status" value="1"/>
</dbReference>
<dbReference type="FunFam" id="1.10.357.20:FF:000002">
    <property type="entry name" value="Solute carrier family 41, member 2"/>
    <property type="match status" value="1"/>
</dbReference>
<dbReference type="Gene3D" id="1.10.357.20">
    <property type="entry name" value="SLC41 divalent cation transporters, integral membrane domain"/>
    <property type="match status" value="2"/>
</dbReference>
<dbReference type="InterPro" id="IPR006667">
    <property type="entry name" value="SLC41_membr_dom"/>
</dbReference>
<dbReference type="InterPro" id="IPR036739">
    <property type="entry name" value="SLC41_membr_dom_sf"/>
</dbReference>
<dbReference type="InterPro" id="IPR045349">
    <property type="entry name" value="SLC41A1-3"/>
</dbReference>
<dbReference type="PANTHER" id="PTHR16228">
    <property type="entry name" value="DIVALENT CATION TRANSPORTER SOLUTE CARRIER FAMILY 41"/>
    <property type="match status" value="1"/>
</dbReference>
<dbReference type="PANTHER" id="PTHR16228:SF23">
    <property type="entry name" value="SOLUTE CARRIER FAMILY 41 MEMBER 1"/>
    <property type="match status" value="1"/>
</dbReference>
<dbReference type="Pfam" id="PF01769">
    <property type="entry name" value="MgtE"/>
    <property type="match status" value="2"/>
</dbReference>
<dbReference type="SUPFAM" id="SSF161093">
    <property type="entry name" value="MgtE membrane domain-like"/>
    <property type="match status" value="2"/>
</dbReference>
<keyword id="KW-1003">Cell membrane</keyword>
<keyword id="KW-0406">Ion transport</keyword>
<keyword id="KW-0460">Magnesium</keyword>
<keyword id="KW-0472">Membrane</keyword>
<keyword id="KW-0597">Phosphoprotein</keyword>
<keyword id="KW-1185">Reference proteome</keyword>
<keyword id="KW-0677">Repeat</keyword>
<keyword id="KW-0812">Transmembrane</keyword>
<keyword id="KW-1133">Transmembrane helix</keyword>
<keyword id="KW-0813">Transport</keyword>
<sequence>MSSKPEPKDVHQLNGTGPSASPCSSDGPGREPLAGTSEFLGPDGAGVEVVIESRANAKGVREEDALLENGSQSNESDDVSTDRGPAPPSPLKETSFSIGLQVLFPFLLAGFGTVAAGMVLDIVQHWEVFQKVTEVFILVPALLGLKGNLEMTLASRLSTAANIGHMDTPKELWRMITGNMALIQVQATVVGFLASIAAVVFGWIPDGHFSIPHAFLLCASSVATAFIASLVLGMIMIGVIIGSRKIGINPDNVATPIAASLGDLITLALLSGISWGLYLELNHWRYIYPLVCAFFVALLPVWVVLARRSPATREVLYSGWEPVIIAMAISSVGGLILDKTVSDPNFAGMAVFTPVINGVGGNLVAVQASRISTFLHMNGMPGENSEQAPRRCPSPCTTFFSPDVNSRSARVLFLLVVPGHLVFLYTISCMQGGHTTLTLIFIIFYMTAALLQVLILLYIADWMVHWMWGRGLDPDNFSIPYLTALGDLLGTGLLALSFHVLWLIGDRDTDVGD</sequence>
<organism>
    <name type="scientific">Pongo abelii</name>
    <name type="common">Sumatran orangutan</name>
    <name type="synonym">Pongo pygmaeus abelii</name>
    <dbReference type="NCBI Taxonomy" id="9601"/>
    <lineage>
        <taxon>Eukaryota</taxon>
        <taxon>Metazoa</taxon>
        <taxon>Chordata</taxon>
        <taxon>Craniata</taxon>
        <taxon>Vertebrata</taxon>
        <taxon>Euteleostomi</taxon>
        <taxon>Mammalia</taxon>
        <taxon>Eutheria</taxon>
        <taxon>Euarchontoglires</taxon>
        <taxon>Primates</taxon>
        <taxon>Haplorrhini</taxon>
        <taxon>Catarrhini</taxon>
        <taxon>Hominidae</taxon>
        <taxon>Pongo</taxon>
    </lineage>
</organism>
<evidence type="ECO:0000250" key="1">
    <source>
        <dbReference type="UniProtKB" id="Q8BJA2"/>
    </source>
</evidence>
<evidence type="ECO:0000250" key="2">
    <source>
        <dbReference type="UniProtKB" id="Q8IVJ1"/>
    </source>
</evidence>
<evidence type="ECO:0000255" key="3"/>
<evidence type="ECO:0000256" key="4">
    <source>
        <dbReference type="SAM" id="MobiDB-lite"/>
    </source>
</evidence>
<evidence type="ECO:0000305" key="5"/>
<proteinExistence type="evidence at transcript level"/>